<name>RBM33_HUMAN</name>
<keyword id="KW-0007">Acetylation</keyword>
<keyword id="KW-0025">Alternative splicing</keyword>
<keyword id="KW-0175">Coiled coil</keyword>
<keyword id="KW-0963">Cytoplasm</keyword>
<keyword id="KW-1017">Isopeptide bond</keyword>
<keyword id="KW-0488">Methylation</keyword>
<keyword id="KW-0509">mRNA transport</keyword>
<keyword id="KW-0539">Nucleus</keyword>
<keyword id="KW-0597">Phosphoprotein</keyword>
<keyword id="KW-1267">Proteomics identification</keyword>
<keyword id="KW-1185">Reference proteome</keyword>
<keyword id="KW-0694">RNA-binding</keyword>
<keyword id="KW-0813">Transport</keyword>
<keyword id="KW-0832">Ubl conjugation</keyword>
<protein>
    <recommendedName>
        <fullName>RNA-binding protein 33</fullName>
    </recommendedName>
    <alternativeName>
        <fullName>Proline-rich protein 8</fullName>
    </alternativeName>
    <alternativeName>
        <fullName>RNA-binding motif protein 33</fullName>
    </alternativeName>
</protein>
<proteinExistence type="evidence at protein level"/>
<feature type="initiator methionine" description="Removed" evidence="15">
    <location>
        <position position="1"/>
    </location>
</feature>
<feature type="chain" id="PRO_0000292982" description="RNA-binding protein 33">
    <location>
        <begin position="2"/>
        <end position="1170"/>
    </location>
</feature>
<feature type="domain" description="RRM">
    <location>
        <begin position="1098"/>
        <end position="1170"/>
    </location>
</feature>
<feature type="region of interest" description="Disordered" evidence="3">
    <location>
        <begin position="1"/>
        <end position="152"/>
    </location>
</feature>
<feature type="region of interest" description="Disordered" evidence="3">
    <location>
        <begin position="199"/>
        <end position="221"/>
    </location>
</feature>
<feature type="region of interest" description="Disordered" evidence="3">
    <location>
        <begin position="259"/>
        <end position="708"/>
    </location>
</feature>
<feature type="region of interest" description="Disordered" evidence="3">
    <location>
        <begin position="721"/>
        <end position="784"/>
    </location>
</feature>
<feature type="region of interest" description="Disordered" evidence="3">
    <location>
        <begin position="833"/>
        <end position="863"/>
    </location>
</feature>
<feature type="region of interest" description="Disordered" evidence="3">
    <location>
        <begin position="942"/>
        <end position="1050"/>
    </location>
</feature>
<feature type="coiled-coil region" evidence="2">
    <location>
        <begin position="789"/>
        <end position="835"/>
    </location>
</feature>
<feature type="compositionally biased region" description="Basic and acidic residues" evidence="3">
    <location>
        <begin position="20"/>
        <end position="36"/>
    </location>
</feature>
<feature type="compositionally biased region" description="Acidic residues" evidence="3">
    <location>
        <begin position="37"/>
        <end position="49"/>
    </location>
</feature>
<feature type="compositionally biased region" description="Polar residues" evidence="3">
    <location>
        <begin position="82"/>
        <end position="108"/>
    </location>
</feature>
<feature type="compositionally biased region" description="Acidic residues" evidence="3">
    <location>
        <begin position="112"/>
        <end position="126"/>
    </location>
</feature>
<feature type="compositionally biased region" description="Acidic residues" evidence="3">
    <location>
        <begin position="203"/>
        <end position="214"/>
    </location>
</feature>
<feature type="compositionally biased region" description="Basic residues" evidence="3">
    <location>
        <begin position="267"/>
        <end position="278"/>
    </location>
</feature>
<feature type="compositionally biased region" description="Basic and acidic residues" evidence="3">
    <location>
        <begin position="289"/>
        <end position="306"/>
    </location>
</feature>
<feature type="compositionally biased region" description="Pro residues" evidence="3">
    <location>
        <begin position="311"/>
        <end position="329"/>
    </location>
</feature>
<feature type="compositionally biased region" description="Low complexity" evidence="3">
    <location>
        <begin position="335"/>
        <end position="348"/>
    </location>
</feature>
<feature type="compositionally biased region" description="Low complexity" evidence="3">
    <location>
        <begin position="357"/>
        <end position="372"/>
    </location>
</feature>
<feature type="compositionally biased region" description="Low complexity" evidence="3">
    <location>
        <begin position="394"/>
        <end position="403"/>
    </location>
</feature>
<feature type="compositionally biased region" description="Pro residues" evidence="3">
    <location>
        <begin position="419"/>
        <end position="433"/>
    </location>
</feature>
<feature type="compositionally biased region" description="Pro residues" evidence="3">
    <location>
        <begin position="481"/>
        <end position="490"/>
    </location>
</feature>
<feature type="compositionally biased region" description="Pro residues" evidence="3">
    <location>
        <begin position="554"/>
        <end position="568"/>
    </location>
</feature>
<feature type="compositionally biased region" description="Pro residues" evidence="3">
    <location>
        <begin position="582"/>
        <end position="630"/>
    </location>
</feature>
<feature type="compositionally biased region" description="Basic residues" evidence="3">
    <location>
        <begin position="632"/>
        <end position="642"/>
    </location>
</feature>
<feature type="compositionally biased region" description="Polar residues" evidence="3">
    <location>
        <begin position="662"/>
        <end position="708"/>
    </location>
</feature>
<feature type="compositionally biased region" description="Polar residues" evidence="3">
    <location>
        <begin position="721"/>
        <end position="732"/>
    </location>
</feature>
<feature type="modified residue" description="N-acetylalanine" evidence="15">
    <location>
        <position position="2"/>
    </location>
</feature>
<feature type="modified residue" description="Phosphoserine" evidence="9 11 12 13 14 16">
    <location>
        <position position="41"/>
    </location>
</feature>
<feature type="modified residue" description="Phosphoserine" evidence="9 10 11 12 13 14 16">
    <location>
        <position position="205"/>
    </location>
</feature>
<feature type="modified residue" description="Phosphoserine" evidence="16">
    <location>
        <position position="233"/>
    </location>
</feature>
<feature type="modified residue" description="Asymmetric dimethylarginine" evidence="17">
    <location>
        <position position="470"/>
    </location>
</feature>
<feature type="modified residue" description="Phosphoserine" evidence="16">
    <location>
        <position position="741"/>
    </location>
</feature>
<feature type="modified residue" description="Phosphoserine" evidence="13 14 16 18">
    <location>
        <position position="765"/>
    </location>
</feature>
<feature type="modified residue" description="Phosphoserine" evidence="16">
    <location>
        <position position="951"/>
    </location>
</feature>
<feature type="modified residue" description="Phosphoserine" evidence="1">
    <location>
        <position position="973"/>
    </location>
</feature>
<feature type="modified residue" description="Phosphoserine" evidence="16">
    <location>
        <position position="991"/>
    </location>
</feature>
<feature type="modified residue" description="Asymmetric dimethylarginine; alternate" evidence="17">
    <location>
        <position position="1028"/>
    </location>
</feature>
<feature type="modified residue" description="Omega-N-methylarginine; alternate" evidence="17">
    <location>
        <position position="1028"/>
    </location>
</feature>
<feature type="cross-link" description="Glycyl lysine isopeptide (Lys-Gly) (interchain with G-Cter in SUMO2)" evidence="19">
    <location>
        <position position="960"/>
    </location>
</feature>
<feature type="splice variant" id="VSP_030143" description="In isoform 2." evidence="6">
    <original>ELSAEAKAALLEFEERERQHKQ</original>
    <variation>GNFFACLPSSFTLISTSSIVLL</variation>
    <location>
        <begin position="247"/>
        <end position="268"/>
    </location>
</feature>
<feature type="splice variant" id="VSP_030144" description="In isoform 2." evidence="6">
    <location>
        <begin position="269"/>
        <end position="1170"/>
    </location>
</feature>
<feature type="sequence variant" id="VAR_052223" description="In dbSNP:rs3735576.">
    <original>T</original>
    <variation>A</variation>
    <location>
        <position position="574"/>
    </location>
</feature>
<feature type="mutagenesis site" description="Abolished interaction with ALKBH5." evidence="5">
    <original>S</original>
    <variation>A</variation>
    <location>
        <position position="1101"/>
    </location>
</feature>
<feature type="mutagenesis site" description="Does not affect interaction with ALKBH5." evidence="5">
    <original>S</original>
    <variation>A</variation>
    <location>
        <position position="1106"/>
    </location>
</feature>
<feature type="mutagenesis site" description="Does not affect interaction with ALKBH5." evidence="5">
    <original>T</original>
    <variation>A</variation>
    <location>
        <position position="1110"/>
    </location>
</feature>
<feature type="mutagenesis site" description="Abolished interaction with ALKBH5." evidence="5">
    <original>R</original>
    <variation>A</variation>
    <location>
        <position position="1134"/>
    </location>
</feature>
<feature type="mutagenesis site" description="Does not affect interaction with ALKBH5." evidence="5">
    <original>V</original>
    <variation>A</variation>
    <location>
        <position position="1169"/>
    </location>
</feature>
<organism>
    <name type="scientific">Homo sapiens</name>
    <name type="common">Human</name>
    <dbReference type="NCBI Taxonomy" id="9606"/>
    <lineage>
        <taxon>Eukaryota</taxon>
        <taxon>Metazoa</taxon>
        <taxon>Chordata</taxon>
        <taxon>Craniata</taxon>
        <taxon>Vertebrata</taxon>
        <taxon>Euteleostomi</taxon>
        <taxon>Mammalia</taxon>
        <taxon>Eutheria</taxon>
        <taxon>Euarchontoglires</taxon>
        <taxon>Primates</taxon>
        <taxon>Haplorrhini</taxon>
        <taxon>Catarrhini</taxon>
        <taxon>Hominidae</taxon>
        <taxon>Homo</taxon>
    </lineage>
</organism>
<evidence type="ECO:0000250" key="1">
    <source>
        <dbReference type="UniProtKB" id="Q9CXK9"/>
    </source>
</evidence>
<evidence type="ECO:0000255" key="2"/>
<evidence type="ECO:0000256" key="3">
    <source>
        <dbReference type="SAM" id="MobiDB-lite"/>
    </source>
</evidence>
<evidence type="ECO:0000269" key="4">
    <source>
    </source>
</evidence>
<evidence type="ECO:0000269" key="5">
    <source>
    </source>
</evidence>
<evidence type="ECO:0000303" key="6">
    <source>
    </source>
</evidence>
<evidence type="ECO:0000303" key="7">
    <source>
    </source>
</evidence>
<evidence type="ECO:0000305" key="8"/>
<evidence type="ECO:0007744" key="9">
    <source>
    </source>
</evidence>
<evidence type="ECO:0007744" key="10">
    <source>
    </source>
</evidence>
<evidence type="ECO:0007744" key="11">
    <source>
    </source>
</evidence>
<evidence type="ECO:0007744" key="12">
    <source>
    </source>
</evidence>
<evidence type="ECO:0007744" key="13">
    <source>
    </source>
</evidence>
<evidence type="ECO:0007744" key="14">
    <source>
    </source>
</evidence>
<evidence type="ECO:0007744" key="15">
    <source>
    </source>
</evidence>
<evidence type="ECO:0007744" key="16">
    <source>
    </source>
</evidence>
<evidence type="ECO:0007744" key="17">
    <source>
    </source>
</evidence>
<evidence type="ECO:0007744" key="18">
    <source>
    </source>
</evidence>
<evidence type="ECO:0007744" key="19">
    <source>
    </source>
</evidence>
<comment type="function">
    <text evidence="4 5">RNA reader protein, which recognizes and binds specific RNAs, thereby regulating RNA metabolic processes, such as mRNA export, mRNA stability and/or translation (PubMed:35589130, PubMed:37257451). Binds a subset of intronless RNAs containing GC-rich elements, such as NORAD, and promotes their nuclear export by recruiting target RNAs to components of the NXF1-NXT1 RNA export machinery (PubMed:35589130). Specifically recognizes and binds N6-methyladenosine (m6A)-containing mRNAs, promoting their demethylation by ALKBH5 (PubMed:37257451). Acts as an molecular adapter, which (1) promotes ALKBH5 recruitment to m6A-containing transcripts and (2) activates ALKBH5 demethylase activity by recruiting SENP1, leading to ALKBH5 deSUMOylation and subsequent activation (PubMed:37257451).</text>
</comment>
<comment type="subunit">
    <text evidence="4 5">Associates with the NXF1-NXT1 RNA export complex (PubMed:35589130). Interacts with ALKBH5; facilitating ALKBH5 recruitment to m6A-containing transcripts (PubMed:37257451). Interacts with SENP1; promoting ALKBH5 deSUMOylation and subsequent activation (PubMed:37257451).</text>
</comment>
<comment type="subcellular location">
    <subcellularLocation>
        <location evidence="4">Nucleus</location>
    </subcellularLocation>
    <subcellularLocation>
        <location evidence="4">Cytoplasm</location>
    </subcellularLocation>
    <text evidence="4">Localizes predominantly to the nucleus.</text>
</comment>
<comment type="alternative products">
    <event type="alternative splicing"/>
    <isoform>
        <id>Q96EV2-1</id>
        <name>1</name>
        <sequence type="displayed"/>
    </isoform>
    <isoform>
        <id>Q96EV2-2</id>
        <name>2</name>
        <sequence type="described" ref="VSP_030143 VSP_030144"/>
    </isoform>
</comment>
<comment type="sequence caution" evidence="8">
    <conflict type="erroneous initiation">
        <sequence resource="EMBL-CDS" id="AAH93947"/>
    </conflict>
</comment>
<comment type="sequence caution" evidence="8">
    <conflict type="erroneous initiation">
        <sequence resource="EMBL-CDS" id="AAH93949"/>
    </conflict>
</comment>
<comment type="sequence caution" evidence="8">
    <conflict type="erroneous gene model prediction">
        <sequence resource="EMBL-CDS" id="AAS01989"/>
    </conflict>
</comment>
<comment type="sequence caution" evidence="8">
    <conflict type="erroneous gene model prediction">
        <sequence resource="EMBL-CDS" id="AAS02026"/>
    </conflict>
</comment>
<comment type="sequence caution" evidence="8">
    <conflict type="erroneous gene model prediction">
        <sequence resource="EMBL-CDS" id="AAS07551"/>
    </conflict>
</comment>
<comment type="sequence caution" evidence="8">
    <conflict type="miscellaneous discrepancy">
        <sequence resource="EMBL-CDS" id="CAB70894"/>
    </conflict>
    <text>Intron retention.</text>
</comment>
<comment type="sequence caution" evidence="8">
    <conflict type="erroneous gene model prediction">
        <sequence resource="EMBL-CDS" id="EAL23911"/>
    </conflict>
</comment>
<comment type="sequence caution" evidence="8">
    <conflict type="erroneous gene model prediction">
        <sequence resource="EMBL-CDS" id="EAL23912"/>
    </conflict>
</comment>
<comment type="sequence caution" evidence="8">
    <conflict type="erroneous gene model prediction">
        <sequence resource="EMBL-CDS" id="EAX04539"/>
    </conflict>
</comment>
<gene>
    <name evidence="7" type="primary">RBM33</name>
    <name type="synonym">PRR8</name>
</gene>
<dbReference type="EMBL" id="AC009403">
    <property type="protein sequence ID" value="AAS02026.1"/>
    <property type="status" value="ALT_SEQ"/>
    <property type="molecule type" value="Genomic_DNA"/>
</dbReference>
<dbReference type="EMBL" id="AC078834">
    <property type="protein sequence ID" value="AAS01989.1"/>
    <property type="status" value="ALT_SEQ"/>
    <property type="molecule type" value="Genomic_DNA"/>
</dbReference>
<dbReference type="EMBL" id="AC092460">
    <property type="protein sequence ID" value="AAS07551.1"/>
    <property type="status" value="ALT_SEQ"/>
    <property type="molecule type" value="Genomic_DNA"/>
</dbReference>
<dbReference type="EMBL" id="CH236954">
    <property type="protein sequence ID" value="EAL23911.1"/>
    <property type="status" value="ALT_SEQ"/>
    <property type="molecule type" value="Genomic_DNA"/>
</dbReference>
<dbReference type="EMBL" id="CH236954">
    <property type="protein sequence ID" value="EAL23912.1"/>
    <property type="status" value="ALT_SEQ"/>
    <property type="molecule type" value="Genomic_DNA"/>
</dbReference>
<dbReference type="EMBL" id="CH471149">
    <property type="protein sequence ID" value="EAX04539.1"/>
    <property type="status" value="ALT_SEQ"/>
    <property type="molecule type" value="Genomic_DNA"/>
</dbReference>
<dbReference type="EMBL" id="BC011923">
    <property type="protein sequence ID" value="AAH11923.1"/>
    <property type="molecule type" value="mRNA"/>
</dbReference>
<dbReference type="EMBL" id="BC093947">
    <property type="protein sequence ID" value="AAH93947.1"/>
    <property type="status" value="ALT_INIT"/>
    <property type="molecule type" value="mRNA"/>
</dbReference>
<dbReference type="EMBL" id="BC093949">
    <property type="protein sequence ID" value="AAH93949.1"/>
    <property type="status" value="ALT_INIT"/>
    <property type="molecule type" value="mRNA"/>
</dbReference>
<dbReference type="EMBL" id="AL137724">
    <property type="protein sequence ID" value="CAB70894.1"/>
    <property type="status" value="ALT_SEQ"/>
    <property type="molecule type" value="mRNA"/>
</dbReference>
<dbReference type="CCDS" id="CCDS5941.2">
    <molecule id="Q96EV2-1"/>
</dbReference>
<dbReference type="PIR" id="T46375">
    <property type="entry name" value="T46375"/>
</dbReference>
<dbReference type="RefSeq" id="NP_444271.2">
    <molecule id="Q96EV2-1"/>
    <property type="nucleotide sequence ID" value="NM_053043.3"/>
</dbReference>
<dbReference type="SMR" id="Q96EV2"/>
<dbReference type="BioGRID" id="127585">
    <property type="interactions" value="130"/>
</dbReference>
<dbReference type="FunCoup" id="Q96EV2">
    <property type="interactions" value="1782"/>
</dbReference>
<dbReference type="IntAct" id="Q96EV2">
    <property type="interactions" value="77"/>
</dbReference>
<dbReference type="MINT" id="Q96EV2"/>
<dbReference type="STRING" id="9606.ENSP00000384160"/>
<dbReference type="GlyCosmos" id="Q96EV2">
    <property type="glycosylation" value="1 site, 1 glycan"/>
</dbReference>
<dbReference type="GlyGen" id="Q96EV2">
    <property type="glycosylation" value="9 sites, 1 N-linked glycan (1 site), 1 O-linked glycan (7 sites)"/>
</dbReference>
<dbReference type="iPTMnet" id="Q96EV2"/>
<dbReference type="PhosphoSitePlus" id="Q96EV2"/>
<dbReference type="BioMuta" id="RBM33"/>
<dbReference type="DMDM" id="215274198"/>
<dbReference type="jPOST" id="Q96EV2"/>
<dbReference type="MassIVE" id="Q96EV2"/>
<dbReference type="PaxDb" id="9606-ENSP00000384160"/>
<dbReference type="PeptideAtlas" id="Q96EV2"/>
<dbReference type="ProteomicsDB" id="76453">
    <molecule id="Q96EV2-1"/>
</dbReference>
<dbReference type="ProteomicsDB" id="76454">
    <molecule id="Q96EV2-2"/>
</dbReference>
<dbReference type="Pumba" id="Q96EV2"/>
<dbReference type="Antibodypedia" id="18863">
    <property type="antibodies" value="46 antibodies from 10 providers"/>
</dbReference>
<dbReference type="DNASU" id="155435"/>
<dbReference type="Ensembl" id="ENST00000287912.7">
    <molecule id="Q96EV2-2"/>
    <property type="protein sequence ID" value="ENSP00000287912.3"/>
    <property type="gene ID" value="ENSG00000184863.11"/>
</dbReference>
<dbReference type="Ensembl" id="ENST00000401878.8">
    <molecule id="Q96EV2-1"/>
    <property type="protein sequence ID" value="ENSP00000384160.3"/>
    <property type="gene ID" value="ENSG00000184863.11"/>
</dbReference>
<dbReference type="GeneID" id="155435"/>
<dbReference type="KEGG" id="hsa:155435"/>
<dbReference type="MANE-Select" id="ENST00000401878.8">
    <property type="protein sequence ID" value="ENSP00000384160.3"/>
    <property type="RefSeq nucleotide sequence ID" value="NM_053043.3"/>
    <property type="RefSeq protein sequence ID" value="NP_444271.2"/>
</dbReference>
<dbReference type="UCSC" id="uc003wme.4">
    <molecule id="Q96EV2-1"/>
    <property type="organism name" value="human"/>
</dbReference>
<dbReference type="AGR" id="HGNC:27223"/>
<dbReference type="CTD" id="155435"/>
<dbReference type="DisGeNET" id="155435"/>
<dbReference type="GeneCards" id="RBM33"/>
<dbReference type="HGNC" id="HGNC:27223">
    <property type="gene designation" value="RBM33"/>
</dbReference>
<dbReference type="HPA" id="ENSG00000184863">
    <property type="expression patterns" value="Low tissue specificity"/>
</dbReference>
<dbReference type="MIM" id="620833">
    <property type="type" value="gene"/>
</dbReference>
<dbReference type="neXtProt" id="NX_Q96EV2"/>
<dbReference type="OpenTargets" id="ENSG00000184863"/>
<dbReference type="PharmGKB" id="PA142671093"/>
<dbReference type="VEuPathDB" id="HostDB:ENSG00000184863"/>
<dbReference type="eggNOG" id="ENOG502QR1Z">
    <property type="taxonomic scope" value="Eukaryota"/>
</dbReference>
<dbReference type="GeneTree" id="ENSGT00530000063891"/>
<dbReference type="HOGENOM" id="CLU_093358_0_0_1"/>
<dbReference type="InParanoid" id="Q96EV2"/>
<dbReference type="OMA" id="EQHNSPA"/>
<dbReference type="OrthoDB" id="5990677at2759"/>
<dbReference type="PAN-GO" id="Q96EV2">
    <property type="GO annotations" value="0 GO annotations based on evolutionary models"/>
</dbReference>
<dbReference type="PhylomeDB" id="Q96EV2"/>
<dbReference type="TreeFam" id="TF332363"/>
<dbReference type="PathwayCommons" id="Q96EV2"/>
<dbReference type="SignaLink" id="Q96EV2"/>
<dbReference type="BioGRID-ORCS" id="155435">
    <property type="hits" value="214 hits in 1157 CRISPR screens"/>
</dbReference>
<dbReference type="ChiTaRS" id="RBM33">
    <property type="organism name" value="human"/>
</dbReference>
<dbReference type="GeneWiki" id="RBM33"/>
<dbReference type="GenomeRNAi" id="155435"/>
<dbReference type="Pharos" id="Q96EV2">
    <property type="development level" value="Tdark"/>
</dbReference>
<dbReference type="PRO" id="PR:Q96EV2"/>
<dbReference type="Proteomes" id="UP000005640">
    <property type="component" value="Chromosome 7"/>
</dbReference>
<dbReference type="RNAct" id="Q96EV2">
    <property type="molecule type" value="protein"/>
</dbReference>
<dbReference type="Bgee" id="ENSG00000184863">
    <property type="expression patterns" value="Expressed in calcaneal tendon and 178 other cell types or tissues"/>
</dbReference>
<dbReference type="ExpressionAtlas" id="Q96EV2">
    <property type="expression patterns" value="baseline and differential"/>
</dbReference>
<dbReference type="GO" id="GO:0005737">
    <property type="term" value="C:cytoplasm"/>
    <property type="evidence" value="ECO:0000314"/>
    <property type="project" value="UniProtKB"/>
</dbReference>
<dbReference type="GO" id="GO:0005634">
    <property type="term" value="C:nucleus"/>
    <property type="evidence" value="ECO:0000314"/>
    <property type="project" value="UniProtKB"/>
</dbReference>
<dbReference type="GO" id="GO:0106222">
    <property type="term" value="F:lncRNA binding"/>
    <property type="evidence" value="ECO:0000314"/>
    <property type="project" value="UniProtKB"/>
</dbReference>
<dbReference type="GO" id="GO:1990247">
    <property type="term" value="F:N6-methyladenosine-containing RNA reader activity"/>
    <property type="evidence" value="ECO:0000314"/>
    <property type="project" value="UniProtKB"/>
</dbReference>
<dbReference type="GO" id="GO:0030674">
    <property type="term" value="F:protein-macromolecule adaptor activity"/>
    <property type="evidence" value="ECO:0000314"/>
    <property type="project" value="UniProtKB"/>
</dbReference>
<dbReference type="GO" id="GO:0003723">
    <property type="term" value="F:RNA binding"/>
    <property type="evidence" value="ECO:0000314"/>
    <property type="project" value="UniProtKB"/>
</dbReference>
<dbReference type="GO" id="GO:0051028">
    <property type="term" value="P:mRNA transport"/>
    <property type="evidence" value="ECO:0007669"/>
    <property type="project" value="UniProtKB-KW"/>
</dbReference>
<dbReference type="GO" id="GO:0043488">
    <property type="term" value="P:regulation of mRNA stability"/>
    <property type="evidence" value="ECO:0000314"/>
    <property type="project" value="UniProt"/>
</dbReference>
<dbReference type="GO" id="GO:0006405">
    <property type="term" value="P:RNA export from nucleus"/>
    <property type="evidence" value="ECO:0000314"/>
    <property type="project" value="UniProtKB"/>
</dbReference>
<dbReference type="FunFam" id="3.30.70.330:FF:000245">
    <property type="entry name" value="RNA-binding protein 33 isoform X4"/>
    <property type="match status" value="1"/>
</dbReference>
<dbReference type="Gene3D" id="3.30.70.330">
    <property type="match status" value="1"/>
</dbReference>
<dbReference type="InterPro" id="IPR012677">
    <property type="entry name" value="Nucleotide-bd_a/b_plait_sf"/>
</dbReference>
<dbReference type="InterPro" id="IPR035979">
    <property type="entry name" value="RBD_domain_sf"/>
</dbReference>
<dbReference type="InterPro" id="IPR039878">
    <property type="entry name" value="RBM33"/>
</dbReference>
<dbReference type="InterPro" id="IPR000504">
    <property type="entry name" value="RRM_dom"/>
</dbReference>
<dbReference type="PANTHER" id="PTHR22014">
    <property type="entry name" value="RNA-BINDING PROTEIN 33"/>
    <property type="match status" value="1"/>
</dbReference>
<dbReference type="PANTHER" id="PTHR22014:SF2">
    <property type="entry name" value="RNA-BINDING PROTEIN 33"/>
    <property type="match status" value="1"/>
</dbReference>
<dbReference type="SMART" id="SM00360">
    <property type="entry name" value="RRM"/>
    <property type="match status" value="1"/>
</dbReference>
<dbReference type="SUPFAM" id="SSF54928">
    <property type="entry name" value="RNA-binding domain, RBD"/>
    <property type="match status" value="1"/>
</dbReference>
<sequence length="1170" mass="129986">MAAALGASGGAGAGDDDFDQFDKPGAERSWRRRAADEDWDSELEDDLLGEDLLSGKKNQSDLSDEELNDDLLQSDNEDEENFSSQGVTISLNATSGMVTSFELSDNTNDQSGEQESEYEQEQGEDELVYHKSDGSELYTQEYPEEGQYEGHEAELTEDQIEYVEEPEEEQLYTDEVLDIEINEPLDEFTGGMETLELQKDIKEESDEEEEDDEESGRLRFKTERKEGTIIRLSDVTRERRNIPETLELSAEAKAALLEFEERERQHKQGRYSSRRGGRRGGPLMCRGVGDQRRESTERGRMKDHRPALLPTQPPVVPQAPPPPPPPPQQQPIRSLFQPQPLQPLLPVQHPHHPSPPQGMHMPPQLETPRMMMTPPPVTPQQPKNIHINPHFKGTVVTPVQVPLLPVPSQPRPAVGPQRFPGPPEFPQHTPGPVPNSFSQPPRLPLQDQWRAPPPPQDRDPFFLGVSGEPRFPSHLFLEQRSPPPPPPPPTLLNSSHPVPTQSPLPFTQPGPAFNQQGQQPVFPRERPVRPALQPPGPVGILHFSQPGSATTRPFIPPRQPFLPGPGQPFLPTHTQPNLQGPLHPPLPPPHQPQPQQPQQQPPPQHQPPHQPPHQPPPQHQPPPQHPPQHPPQHQHHHHHHHLSVPPPPLMPMSQPQFRPHVQTAQPQASSSRMQCPQRQGLRHNTTSQNVSKRPMQQMQPTAPRNSNLRELPIAPSHVIEMSSSRCSATPSAQVKPIVSASPPSRAVAGSRSSQGKTEVKVKPASPVAQPKEEAKTETEFPDEDEETRLYRLKIEEQKRLREEILKQKELRRQQQAGARKKELLERLAQQQQQLYAPPPPAEQEEQALSPSPTNGNPLLPFPGAQVRQNVKNRLLVKNQDVSISNVQPKTSNFVPSSANMQYQGQQMKALKHLRQTRTVPQSQTQPLHKVLPIKPADVEEPAVPQTPRVASIQGRPQDTKPGVKRTVTHRTNSGGGDGPHISSKVRVIKLSGGGGESDGFFHPEGQPQRLPQPPEVGPQPARKVTLTRGGLQQPPHLPAGPHAHSPVPPGIKSIQGIHPAKKAIMHGRGRGVAGPMGRGRLMPNKQNLRVVECKPQPCVVSVEGLSSSTTDAQLKSLLMSVGPIQSLQMLPQQRKAIAKFKEPAHALAFQQKFHRHMIDLSHINVALIVE</sequence>
<accession>Q96EV2</accession>
<accession>A4D244</accession>
<accession>B5MC24</accession>
<accession>Q52LF5</accession>
<accession>Q75LN9</accession>
<accession>Q75ML5</accession>
<accession>Q9NSV0</accession>
<reference key="1">
    <citation type="journal article" date="2003" name="Nature">
        <title>The DNA sequence of human chromosome 7.</title>
        <authorList>
            <person name="Hillier L.W."/>
            <person name="Fulton R.S."/>
            <person name="Fulton L.A."/>
            <person name="Graves T.A."/>
            <person name="Pepin K.H."/>
            <person name="Wagner-McPherson C."/>
            <person name="Layman D."/>
            <person name="Maas J."/>
            <person name="Jaeger S."/>
            <person name="Walker R."/>
            <person name="Wylie K."/>
            <person name="Sekhon M."/>
            <person name="Becker M.C."/>
            <person name="O'Laughlin M.D."/>
            <person name="Schaller M.E."/>
            <person name="Fewell G.A."/>
            <person name="Delehaunty K.D."/>
            <person name="Miner T.L."/>
            <person name="Nash W.E."/>
            <person name="Cordes M."/>
            <person name="Du H."/>
            <person name="Sun H."/>
            <person name="Edwards J."/>
            <person name="Bradshaw-Cordum H."/>
            <person name="Ali J."/>
            <person name="Andrews S."/>
            <person name="Isak A."/>
            <person name="Vanbrunt A."/>
            <person name="Nguyen C."/>
            <person name="Du F."/>
            <person name="Lamar B."/>
            <person name="Courtney L."/>
            <person name="Kalicki J."/>
            <person name="Ozersky P."/>
            <person name="Bielicki L."/>
            <person name="Scott K."/>
            <person name="Holmes A."/>
            <person name="Harkins R."/>
            <person name="Harris A."/>
            <person name="Strong C.M."/>
            <person name="Hou S."/>
            <person name="Tomlinson C."/>
            <person name="Dauphin-Kohlberg S."/>
            <person name="Kozlowicz-Reilly A."/>
            <person name="Leonard S."/>
            <person name="Rohlfing T."/>
            <person name="Rock S.M."/>
            <person name="Tin-Wollam A.-M."/>
            <person name="Abbott A."/>
            <person name="Minx P."/>
            <person name="Maupin R."/>
            <person name="Strowmatt C."/>
            <person name="Latreille P."/>
            <person name="Miller N."/>
            <person name="Johnson D."/>
            <person name="Murray J."/>
            <person name="Woessner J.P."/>
            <person name="Wendl M.C."/>
            <person name="Yang S.-P."/>
            <person name="Schultz B.R."/>
            <person name="Wallis J.W."/>
            <person name="Spieth J."/>
            <person name="Bieri T.A."/>
            <person name="Nelson J.O."/>
            <person name="Berkowicz N."/>
            <person name="Wohldmann P.E."/>
            <person name="Cook L.L."/>
            <person name="Hickenbotham M.T."/>
            <person name="Eldred J."/>
            <person name="Williams D."/>
            <person name="Bedell J.A."/>
            <person name="Mardis E.R."/>
            <person name="Clifton S.W."/>
            <person name="Chissoe S.L."/>
            <person name="Marra M.A."/>
            <person name="Raymond C."/>
            <person name="Haugen E."/>
            <person name="Gillett W."/>
            <person name="Zhou Y."/>
            <person name="James R."/>
            <person name="Phelps K."/>
            <person name="Iadanoto S."/>
            <person name="Bubb K."/>
            <person name="Simms E."/>
            <person name="Levy R."/>
            <person name="Clendenning J."/>
            <person name="Kaul R."/>
            <person name="Kent W.J."/>
            <person name="Furey T.S."/>
            <person name="Baertsch R.A."/>
            <person name="Brent M.R."/>
            <person name="Keibler E."/>
            <person name="Flicek P."/>
            <person name="Bork P."/>
            <person name="Suyama M."/>
            <person name="Bailey J.A."/>
            <person name="Portnoy M.E."/>
            <person name="Torrents D."/>
            <person name="Chinwalla A.T."/>
            <person name="Gish W.R."/>
            <person name="Eddy S.R."/>
            <person name="McPherson J.D."/>
            <person name="Olson M.V."/>
            <person name="Eichler E.E."/>
            <person name="Green E.D."/>
            <person name="Waterston R.H."/>
            <person name="Wilson R.K."/>
        </authorList>
    </citation>
    <scope>NUCLEOTIDE SEQUENCE [LARGE SCALE GENOMIC DNA]</scope>
</reference>
<reference key="2">
    <citation type="journal article" date="2003" name="Science">
        <title>Human chromosome 7: DNA sequence and biology.</title>
        <authorList>
            <person name="Scherer S.W."/>
            <person name="Cheung J."/>
            <person name="MacDonald J.R."/>
            <person name="Osborne L.R."/>
            <person name="Nakabayashi K."/>
            <person name="Herbrick J.-A."/>
            <person name="Carson A.R."/>
            <person name="Parker-Katiraee L."/>
            <person name="Skaug J."/>
            <person name="Khaja R."/>
            <person name="Zhang J."/>
            <person name="Hudek A.K."/>
            <person name="Li M."/>
            <person name="Haddad M."/>
            <person name="Duggan G.E."/>
            <person name="Fernandez B.A."/>
            <person name="Kanematsu E."/>
            <person name="Gentles S."/>
            <person name="Christopoulos C.C."/>
            <person name="Choufani S."/>
            <person name="Kwasnicka D."/>
            <person name="Zheng X.H."/>
            <person name="Lai Z."/>
            <person name="Nusskern D.R."/>
            <person name="Zhang Q."/>
            <person name="Gu Z."/>
            <person name="Lu F."/>
            <person name="Zeesman S."/>
            <person name="Nowaczyk M.J."/>
            <person name="Teshima I."/>
            <person name="Chitayat D."/>
            <person name="Shuman C."/>
            <person name="Weksberg R."/>
            <person name="Zackai E.H."/>
            <person name="Grebe T.A."/>
            <person name="Cox S.R."/>
            <person name="Kirkpatrick S.J."/>
            <person name="Rahman N."/>
            <person name="Friedman J.M."/>
            <person name="Heng H.H.Q."/>
            <person name="Pelicci P.G."/>
            <person name="Lo-Coco F."/>
            <person name="Belloni E."/>
            <person name="Shaffer L.G."/>
            <person name="Pober B."/>
            <person name="Morton C.C."/>
            <person name="Gusella J.F."/>
            <person name="Bruns G.A.P."/>
            <person name="Korf B.R."/>
            <person name="Quade B.J."/>
            <person name="Ligon A.H."/>
            <person name="Ferguson H."/>
            <person name="Higgins A.W."/>
            <person name="Leach N.T."/>
            <person name="Herrick S.R."/>
            <person name="Lemyre E."/>
            <person name="Farra C.G."/>
            <person name="Kim H.-G."/>
            <person name="Summers A.M."/>
            <person name="Gripp K.W."/>
            <person name="Roberts W."/>
            <person name="Szatmari P."/>
            <person name="Winsor E.J.T."/>
            <person name="Grzeschik K.-H."/>
            <person name="Teebi A."/>
            <person name="Minassian B.A."/>
            <person name="Kere J."/>
            <person name="Armengol L."/>
            <person name="Pujana M.A."/>
            <person name="Estivill X."/>
            <person name="Wilson M.D."/>
            <person name="Koop B.F."/>
            <person name="Tosi S."/>
            <person name="Moore G.E."/>
            <person name="Boright A.P."/>
            <person name="Zlotorynski E."/>
            <person name="Kerem B."/>
            <person name="Kroisel P.M."/>
            <person name="Petek E."/>
            <person name="Oscier D.G."/>
            <person name="Mould S.J."/>
            <person name="Doehner H."/>
            <person name="Doehner K."/>
            <person name="Rommens J.M."/>
            <person name="Vincent J.B."/>
            <person name="Venter J.C."/>
            <person name="Li P.W."/>
            <person name="Mural R.J."/>
            <person name="Adams M.D."/>
            <person name="Tsui L.-C."/>
        </authorList>
    </citation>
    <scope>NUCLEOTIDE SEQUENCE [LARGE SCALE GENOMIC DNA]</scope>
</reference>
<reference key="3">
    <citation type="submission" date="2004-06" db="EMBL/GenBank/DDBJ databases">
        <authorList>
            <person name="Mural R.J."/>
            <person name="Istrail S."/>
            <person name="Sutton G.G."/>
            <person name="Florea L."/>
            <person name="Halpern A.L."/>
            <person name="Mobarry C.M."/>
            <person name="Lippert R."/>
            <person name="Walenz B."/>
            <person name="Shatkay H."/>
            <person name="Dew I."/>
            <person name="Miller J.R."/>
            <person name="Flanigan M.J."/>
            <person name="Edwards N.J."/>
            <person name="Bolanos R."/>
            <person name="Fasulo D."/>
            <person name="Halldorsson B.V."/>
            <person name="Hannenhalli S."/>
            <person name="Turner R."/>
            <person name="Yooseph S."/>
            <person name="Lu F."/>
            <person name="Nusskern D.R."/>
            <person name="Shue B.C."/>
            <person name="Zheng X.H."/>
            <person name="Zhong F."/>
            <person name="Delcher A.L."/>
            <person name="Huson D.H."/>
            <person name="Kravitz S.A."/>
            <person name="Mouchard L."/>
            <person name="Reinert K."/>
            <person name="Remington K.A."/>
            <person name="Clark A.G."/>
            <person name="Waterman M.S."/>
            <person name="Eichler E.E."/>
            <person name="Adams M.D."/>
            <person name="Hunkapiller M.W."/>
            <person name="Myers E.W."/>
            <person name="Venter J.C."/>
        </authorList>
    </citation>
    <scope>NUCLEOTIDE SEQUENCE [LARGE SCALE GENOMIC DNA]</scope>
</reference>
<reference key="4">
    <citation type="journal article" date="2004" name="Genome Res.">
        <title>The status, quality, and expansion of the NIH full-length cDNA project: the Mammalian Gene Collection (MGC).</title>
        <authorList>
            <consortium name="The MGC Project Team"/>
        </authorList>
    </citation>
    <scope>NUCLEOTIDE SEQUENCE [LARGE SCALE MRNA] (ISOFORM 2)</scope>
    <scope>NUCLEOTIDE SEQUENCE [LARGE SCALE MRNA] OF 1043-1170 (ISOFORM 1)</scope>
    <source>
        <tissue>Brain</tissue>
        <tissue>Placenta</tissue>
    </source>
</reference>
<reference key="5">
    <citation type="journal article" date="2007" name="BMC Genomics">
        <title>The full-ORF clone resource of the German cDNA consortium.</title>
        <authorList>
            <person name="Bechtel S."/>
            <person name="Rosenfelder H."/>
            <person name="Duda A."/>
            <person name="Schmidt C.P."/>
            <person name="Ernst U."/>
            <person name="Wellenreuther R."/>
            <person name="Mehrle A."/>
            <person name="Schuster C."/>
            <person name="Bahr A."/>
            <person name="Bloecker H."/>
            <person name="Heubner D."/>
            <person name="Hoerlein A."/>
            <person name="Michel G."/>
            <person name="Wedler H."/>
            <person name="Koehrer K."/>
            <person name="Ottenwaelder B."/>
            <person name="Poustka A."/>
            <person name="Wiemann S."/>
            <person name="Schupp I."/>
        </authorList>
    </citation>
    <scope>NUCLEOTIDE SEQUENCE [LARGE SCALE MRNA] OF 46-993 (ISOFORM 1)</scope>
    <source>
        <tissue>Testis</tissue>
    </source>
</reference>
<reference key="6">
    <citation type="journal article" date="2006" name="Cell">
        <title>Global, in vivo, and site-specific phosphorylation dynamics in signaling networks.</title>
        <authorList>
            <person name="Olsen J.V."/>
            <person name="Blagoev B."/>
            <person name="Gnad F."/>
            <person name="Macek B."/>
            <person name="Kumar C."/>
            <person name="Mortensen P."/>
            <person name="Mann M."/>
        </authorList>
    </citation>
    <scope>PHOSPHORYLATION [LARGE SCALE ANALYSIS] AT SER-41 AND SER-205</scope>
    <scope>IDENTIFICATION BY MASS SPECTROMETRY [LARGE SCALE ANALYSIS]</scope>
    <source>
        <tissue>Cervix carcinoma</tissue>
    </source>
</reference>
<reference key="7">
    <citation type="journal article" date="2008" name="Proc. Natl. Acad. Sci. U.S.A.">
        <title>A quantitative atlas of mitotic phosphorylation.</title>
        <authorList>
            <person name="Dephoure N."/>
            <person name="Zhou C."/>
            <person name="Villen J."/>
            <person name="Beausoleil S.A."/>
            <person name="Bakalarski C.E."/>
            <person name="Elledge S.J."/>
            <person name="Gygi S.P."/>
        </authorList>
    </citation>
    <scope>PHOSPHORYLATION [LARGE SCALE ANALYSIS] AT SER-41 AND SER-205</scope>
    <scope>IDENTIFICATION BY MASS SPECTROMETRY [LARGE SCALE ANALYSIS]</scope>
    <source>
        <tissue>Cervix carcinoma</tissue>
    </source>
</reference>
<reference key="8">
    <citation type="journal article" date="2008" name="Proteomics">
        <title>Large-scale phosphoproteome analysis of human liver tissue by enrichment and fractionation of phosphopeptides with strong anion exchange chromatography.</title>
        <authorList>
            <person name="Han G."/>
            <person name="Ye M."/>
            <person name="Zhou H."/>
            <person name="Jiang X."/>
            <person name="Feng S."/>
            <person name="Jiang X."/>
            <person name="Tian R."/>
            <person name="Wan D."/>
            <person name="Zou H."/>
            <person name="Gu J."/>
        </authorList>
    </citation>
    <scope>PHOSPHORYLATION [LARGE SCALE ANALYSIS] AT SER-205</scope>
    <scope>IDENTIFICATION BY MASS SPECTROMETRY [LARGE SCALE ANALYSIS]</scope>
    <source>
        <tissue>Liver</tissue>
    </source>
</reference>
<reference key="9">
    <citation type="journal article" date="2009" name="Sci. Signal.">
        <title>Quantitative phosphoproteomic analysis of T cell receptor signaling reveals system-wide modulation of protein-protein interactions.</title>
        <authorList>
            <person name="Mayya V."/>
            <person name="Lundgren D.H."/>
            <person name="Hwang S.-I."/>
            <person name="Rezaul K."/>
            <person name="Wu L."/>
            <person name="Eng J.K."/>
            <person name="Rodionov V."/>
            <person name="Han D.K."/>
        </authorList>
    </citation>
    <scope>PHOSPHORYLATION [LARGE SCALE ANALYSIS] AT SER-41 AND SER-205</scope>
    <scope>IDENTIFICATION BY MASS SPECTROMETRY [LARGE SCALE ANALYSIS]</scope>
    <source>
        <tissue>Leukemic T-cell</tissue>
    </source>
</reference>
<reference key="10">
    <citation type="journal article" date="2010" name="Sci. Signal.">
        <title>Quantitative phosphoproteomics reveals widespread full phosphorylation site occupancy during mitosis.</title>
        <authorList>
            <person name="Olsen J.V."/>
            <person name="Vermeulen M."/>
            <person name="Santamaria A."/>
            <person name="Kumar C."/>
            <person name="Miller M.L."/>
            <person name="Jensen L.J."/>
            <person name="Gnad F."/>
            <person name="Cox J."/>
            <person name="Jensen T.S."/>
            <person name="Nigg E.A."/>
            <person name="Brunak S."/>
            <person name="Mann M."/>
        </authorList>
    </citation>
    <scope>PHOSPHORYLATION [LARGE SCALE ANALYSIS] AT SER-41; SER-205 AND SER-765</scope>
    <scope>IDENTIFICATION BY MASS SPECTROMETRY [LARGE SCALE ANALYSIS]</scope>
    <source>
        <tissue>Cervix carcinoma</tissue>
    </source>
</reference>
<reference key="11">
    <citation type="journal article" date="2011" name="BMC Syst. Biol.">
        <title>Initial characterization of the human central proteome.</title>
        <authorList>
            <person name="Burkard T.R."/>
            <person name="Planyavsky M."/>
            <person name="Kaupe I."/>
            <person name="Breitwieser F.P."/>
            <person name="Buerckstuemmer T."/>
            <person name="Bennett K.L."/>
            <person name="Superti-Furga G."/>
            <person name="Colinge J."/>
        </authorList>
    </citation>
    <scope>IDENTIFICATION BY MASS SPECTROMETRY [LARGE SCALE ANALYSIS]</scope>
</reference>
<reference key="12">
    <citation type="journal article" date="2011" name="Sci. Signal.">
        <title>System-wide temporal characterization of the proteome and phosphoproteome of human embryonic stem cell differentiation.</title>
        <authorList>
            <person name="Rigbolt K.T."/>
            <person name="Prokhorova T.A."/>
            <person name="Akimov V."/>
            <person name="Henningsen J."/>
            <person name="Johansen P.T."/>
            <person name="Kratchmarova I."/>
            <person name="Kassem M."/>
            <person name="Mann M."/>
            <person name="Olsen J.V."/>
            <person name="Blagoev B."/>
        </authorList>
    </citation>
    <scope>PHOSPHORYLATION [LARGE SCALE ANALYSIS] AT SER-41; SER-205 AND SER-765</scope>
    <scope>IDENTIFICATION BY MASS SPECTROMETRY [LARGE SCALE ANALYSIS]</scope>
</reference>
<reference key="13">
    <citation type="journal article" date="2012" name="Proc. Natl. Acad. Sci. U.S.A.">
        <title>N-terminal acetylome analyses and functional insights of the N-terminal acetyltransferase NatB.</title>
        <authorList>
            <person name="Van Damme P."/>
            <person name="Lasa M."/>
            <person name="Polevoda B."/>
            <person name="Gazquez C."/>
            <person name="Elosegui-Artola A."/>
            <person name="Kim D.S."/>
            <person name="De Juan-Pardo E."/>
            <person name="Demeyer K."/>
            <person name="Hole K."/>
            <person name="Larrea E."/>
            <person name="Timmerman E."/>
            <person name="Prieto J."/>
            <person name="Arnesen T."/>
            <person name="Sherman F."/>
            <person name="Gevaert K."/>
            <person name="Aldabe R."/>
        </authorList>
    </citation>
    <scope>ACETYLATION [LARGE SCALE ANALYSIS] AT ALA-2</scope>
    <scope>CLEAVAGE OF INITIATOR METHIONINE [LARGE SCALE ANALYSIS]</scope>
    <scope>IDENTIFICATION BY MASS SPECTROMETRY [LARGE SCALE ANALYSIS]</scope>
</reference>
<reference key="14">
    <citation type="journal article" date="2013" name="J. Proteome Res.">
        <title>Toward a comprehensive characterization of a human cancer cell phosphoproteome.</title>
        <authorList>
            <person name="Zhou H."/>
            <person name="Di Palma S."/>
            <person name="Preisinger C."/>
            <person name="Peng M."/>
            <person name="Polat A.N."/>
            <person name="Heck A.J."/>
            <person name="Mohammed S."/>
        </authorList>
    </citation>
    <scope>PHOSPHORYLATION [LARGE SCALE ANALYSIS] AT SER-41; SER-205; SER-233; SER-741; SER-765; SER-951 AND SER-991</scope>
    <scope>IDENTIFICATION BY MASS SPECTROMETRY [LARGE SCALE ANALYSIS]</scope>
    <source>
        <tissue>Cervix carcinoma</tissue>
        <tissue>Erythroleukemia</tissue>
    </source>
</reference>
<reference key="15">
    <citation type="journal article" date="2014" name="J. Proteomics">
        <title>An enzyme assisted RP-RPLC approach for in-depth analysis of human liver phosphoproteome.</title>
        <authorList>
            <person name="Bian Y."/>
            <person name="Song C."/>
            <person name="Cheng K."/>
            <person name="Dong M."/>
            <person name="Wang F."/>
            <person name="Huang J."/>
            <person name="Sun D."/>
            <person name="Wang L."/>
            <person name="Ye M."/>
            <person name="Zou H."/>
        </authorList>
    </citation>
    <scope>PHOSPHORYLATION [LARGE SCALE ANALYSIS] AT SER-765</scope>
    <scope>IDENTIFICATION BY MASS SPECTROMETRY [LARGE SCALE ANALYSIS]</scope>
    <source>
        <tissue>Liver</tissue>
    </source>
</reference>
<reference key="16">
    <citation type="journal article" date="2014" name="Mol. Cell. Proteomics">
        <title>Immunoaffinity enrichment and mass spectrometry analysis of protein methylation.</title>
        <authorList>
            <person name="Guo A."/>
            <person name="Gu H."/>
            <person name="Zhou J."/>
            <person name="Mulhern D."/>
            <person name="Wang Y."/>
            <person name="Lee K.A."/>
            <person name="Yang V."/>
            <person name="Aguiar M."/>
            <person name="Kornhauser J."/>
            <person name="Jia X."/>
            <person name="Ren J."/>
            <person name="Beausoleil S.A."/>
            <person name="Silva J.C."/>
            <person name="Vemulapalli V."/>
            <person name="Bedford M.T."/>
            <person name="Comb M.J."/>
        </authorList>
    </citation>
    <scope>METHYLATION [LARGE SCALE ANALYSIS] AT ARG-470 AND ARG-1028</scope>
    <scope>IDENTIFICATION BY MASS SPECTROMETRY [LARGE SCALE ANALYSIS]</scope>
    <source>
        <tissue>Colon carcinoma</tissue>
    </source>
</reference>
<reference key="17">
    <citation type="journal article" date="2017" name="Nat. Struct. Mol. Biol.">
        <title>Site-specific mapping of the human SUMO proteome reveals co-modification with phosphorylation.</title>
        <authorList>
            <person name="Hendriks I.A."/>
            <person name="Lyon D."/>
            <person name="Young C."/>
            <person name="Jensen L.J."/>
            <person name="Vertegaal A.C."/>
            <person name="Nielsen M.L."/>
        </authorList>
    </citation>
    <scope>SUMOYLATION [LARGE SCALE ANALYSIS] AT LYS-960</scope>
    <scope>IDENTIFICATION BY MASS SPECTROMETRY [LARGE SCALE ANALYSIS]</scope>
</reference>
<reference key="18">
    <citation type="journal article" date="2022" name="Genes Dev.">
        <title>RBM33 directs the nuclear export of transcripts containing GC-rich elements.</title>
        <authorList>
            <person name="Thomas A."/>
            <person name="Rehfeld F."/>
            <person name="Zhang H."/>
            <person name="Chang T.C."/>
            <person name="Goodarzi M."/>
            <person name="Gillet F."/>
            <person name="Mendell J.T."/>
        </authorList>
    </citation>
    <scope>FUNCTION</scope>
    <scope>SUBCELLULAR LOCATION</scope>
    <scope>INTERACTION WITH THE NXF1-NXT1 RNA EXPORT COMPLEX</scope>
</reference>
<reference key="19">
    <citation type="journal article" date="2023" name="Mol. Cell">
        <title>RBM33 is a unique m6A RNA-binding protein that regulates ALKBH5 demethylase activity and substrate selectivity.</title>
        <authorList>
            <person name="Yu F."/>
            <person name="Zhu A.C."/>
            <person name="Liu S."/>
            <person name="Gao B."/>
            <person name="Wang Y."/>
            <person name="Khudaverdyan N."/>
            <person name="Yu C."/>
            <person name="Wu Q."/>
            <person name="Jiang Y."/>
            <person name="Song J."/>
            <person name="Jin L."/>
            <person name="He C."/>
            <person name="Qian Z."/>
        </authorList>
    </citation>
    <scope>FUNCTION</scope>
    <scope>INTERACTION WITH SENP1 AND ALKBH5</scope>
    <scope>MUTAGENESIS OF SER-1101; SER-1106; THR-1110; ARG-1134 AND VAL-1169</scope>
</reference>